<sequence length="42" mass="4855">MQYFKTYLSTAPVIATIWFGFLAGLLIEINRFFPDALVLPYL</sequence>
<geneLocation type="chloroplast"/>
<proteinExistence type="inferred from homology"/>
<name>PSAJ_CHAGL</name>
<feature type="chain" id="PRO_0000207784" description="Photosystem I reaction center subunit IX">
    <location>
        <begin position="1"/>
        <end position="42"/>
    </location>
</feature>
<feature type="transmembrane region" description="Helical" evidence="1">
    <location>
        <begin position="7"/>
        <end position="27"/>
    </location>
</feature>
<gene>
    <name evidence="1" type="primary">psaJ</name>
</gene>
<reference key="1">
    <citation type="journal article" date="2002" name="Proc. Natl. Acad. Sci. U.S.A.">
        <title>The chloroplast and mitochondrial genome sequences of the charophyte Chaetosphaeridium globosum: insights into the timing of the events that restructured organelle DNAs within the green algal lineage that led to land plants.</title>
        <authorList>
            <person name="Turmel M."/>
            <person name="Otis C."/>
            <person name="Lemieux C."/>
        </authorList>
    </citation>
    <scope>NUCLEOTIDE SEQUENCE [LARGE SCALE GENOMIC DNA]</scope>
    <source>
        <strain>M1311</strain>
    </source>
</reference>
<protein>
    <recommendedName>
        <fullName evidence="1">Photosystem I reaction center subunit IX</fullName>
    </recommendedName>
    <alternativeName>
        <fullName evidence="1">PSI-J</fullName>
    </alternativeName>
</protein>
<dbReference type="EMBL" id="AF494278">
    <property type="protein sequence ID" value="AAM96536.1"/>
    <property type="molecule type" value="Genomic_DNA"/>
</dbReference>
<dbReference type="RefSeq" id="NP_683801.1">
    <property type="nucleotide sequence ID" value="NC_004115.1"/>
</dbReference>
<dbReference type="SMR" id="Q8M9Y5"/>
<dbReference type="GeneID" id="860692"/>
<dbReference type="GO" id="GO:0009535">
    <property type="term" value="C:chloroplast thylakoid membrane"/>
    <property type="evidence" value="ECO:0007669"/>
    <property type="project" value="UniProtKB-SubCell"/>
</dbReference>
<dbReference type="GO" id="GO:0009522">
    <property type="term" value="C:photosystem I"/>
    <property type="evidence" value="ECO:0007669"/>
    <property type="project" value="UniProtKB-KW"/>
</dbReference>
<dbReference type="GO" id="GO:0015979">
    <property type="term" value="P:photosynthesis"/>
    <property type="evidence" value="ECO:0007669"/>
    <property type="project" value="UniProtKB-UniRule"/>
</dbReference>
<dbReference type="Gene3D" id="1.20.5.510">
    <property type="entry name" value="Single helix bin"/>
    <property type="match status" value="1"/>
</dbReference>
<dbReference type="HAMAP" id="MF_00522">
    <property type="entry name" value="PSI_PsaJ"/>
    <property type="match status" value="1"/>
</dbReference>
<dbReference type="InterPro" id="IPR002615">
    <property type="entry name" value="PSI_PsaJ"/>
</dbReference>
<dbReference type="InterPro" id="IPR036062">
    <property type="entry name" value="PSI_PsaJ_sf"/>
</dbReference>
<dbReference type="PANTHER" id="PTHR36082">
    <property type="match status" value="1"/>
</dbReference>
<dbReference type="PANTHER" id="PTHR36082:SF2">
    <property type="entry name" value="PHOTOSYSTEM I REACTION CENTER SUBUNIT IX"/>
    <property type="match status" value="1"/>
</dbReference>
<dbReference type="Pfam" id="PF01701">
    <property type="entry name" value="PSI_PsaJ"/>
    <property type="match status" value="1"/>
</dbReference>
<dbReference type="SUPFAM" id="SSF81544">
    <property type="entry name" value="Subunit IX of photosystem I reaction centre, PsaJ"/>
    <property type="match status" value="1"/>
</dbReference>
<organism>
    <name type="scientific">Chaetosphaeridium globosum</name>
    <name type="common">Charophycean green alga</name>
    <name type="synonym">Herposteiron globosum</name>
    <dbReference type="NCBI Taxonomy" id="96477"/>
    <lineage>
        <taxon>Eukaryota</taxon>
        <taxon>Viridiplantae</taxon>
        <taxon>Streptophyta</taxon>
        <taxon>Coleochaetophyceae</taxon>
        <taxon>Coleochaetales</taxon>
        <taxon>Chaetosphaeridiaceae</taxon>
        <taxon>Chaetosphaeridium</taxon>
    </lineage>
</organism>
<keyword id="KW-0150">Chloroplast</keyword>
<keyword id="KW-0472">Membrane</keyword>
<keyword id="KW-0602">Photosynthesis</keyword>
<keyword id="KW-0603">Photosystem I</keyword>
<keyword id="KW-0934">Plastid</keyword>
<keyword id="KW-0793">Thylakoid</keyword>
<keyword id="KW-0812">Transmembrane</keyword>
<keyword id="KW-1133">Transmembrane helix</keyword>
<accession>Q8M9Y5</accession>
<comment type="function">
    <text evidence="1">May help in the organization of the PsaE and PsaF subunits.</text>
</comment>
<comment type="subcellular location">
    <subcellularLocation>
        <location evidence="1">Plastid</location>
        <location evidence="1">Chloroplast thylakoid membrane</location>
        <topology evidence="1">Single-pass membrane protein</topology>
    </subcellularLocation>
</comment>
<comment type="similarity">
    <text evidence="1">Belongs to the PsaJ family.</text>
</comment>
<evidence type="ECO:0000255" key="1">
    <source>
        <dbReference type="HAMAP-Rule" id="MF_00522"/>
    </source>
</evidence>